<gene>
    <name type="primary">lafT</name>
    <name type="ordered locus">VPA1556</name>
</gene>
<accession>Q03477</accession>
<organism>
    <name type="scientific">Vibrio parahaemolyticus serotype O3:K6 (strain RIMD 2210633)</name>
    <dbReference type="NCBI Taxonomy" id="223926"/>
    <lineage>
        <taxon>Bacteria</taxon>
        <taxon>Pseudomonadati</taxon>
        <taxon>Pseudomonadota</taxon>
        <taxon>Gammaproteobacteria</taxon>
        <taxon>Vibrionales</taxon>
        <taxon>Vibrionaceae</taxon>
        <taxon>Vibrio</taxon>
    </lineage>
</organism>
<reference key="1">
    <citation type="journal article" date="1993" name="J. Bacteriol.">
        <title>Identification of genes encoding components of the swarmer cell flagellar motor and propeller and a sigma factor controlling differentiation of Vibrio parahaemolyticus.</title>
        <authorList>
            <person name="McCarter L.L."/>
            <person name="Wright M.E."/>
        </authorList>
    </citation>
    <scope>NUCLEOTIDE SEQUENCE [GENOMIC DNA]</scope>
    <source>
        <strain>BB22</strain>
    </source>
</reference>
<reference key="2">
    <citation type="journal article" date="2003" name="Lancet">
        <title>Genome sequence of Vibrio parahaemolyticus: a pathogenic mechanism distinct from that of V. cholerae.</title>
        <authorList>
            <person name="Makino K."/>
            <person name="Oshima K."/>
            <person name="Kurokawa K."/>
            <person name="Yokoyama K."/>
            <person name="Uda T."/>
            <person name="Tagomori K."/>
            <person name="Iijima Y."/>
            <person name="Najima M."/>
            <person name="Nakano M."/>
            <person name="Yamashita A."/>
            <person name="Kubota Y."/>
            <person name="Kimura S."/>
            <person name="Yasunaga T."/>
            <person name="Honda T."/>
            <person name="Shinagawa H."/>
            <person name="Hattori M."/>
            <person name="Iida T."/>
        </authorList>
    </citation>
    <scope>NUCLEOTIDE SEQUENCE [LARGE SCALE GENOMIC DNA]</scope>
    <source>
        <strain>RIMD 2210633</strain>
    </source>
</reference>
<keyword id="KW-0997">Cell inner membrane</keyword>
<keyword id="KW-1003">Cell membrane</keyword>
<keyword id="KW-0145">Chemotaxis</keyword>
<keyword id="KW-0283">Flagellar rotation</keyword>
<keyword id="KW-0375">Hydrogen ion transport</keyword>
<keyword id="KW-0406">Ion transport</keyword>
<keyword id="KW-0472">Membrane</keyword>
<keyword id="KW-0812">Transmembrane</keyword>
<keyword id="KW-1133">Transmembrane helix</keyword>
<keyword id="KW-0813">Transport</keyword>
<sequence length="285" mass="31325">MQKFLGVLTILVCVFGGYMWAGGKLGAIWQPAEFLIIIGAAAGSLIIGNPPHVLKEMRQQVPATIKGPTEEYEYYMELMALLNNLLETARSRGFKFLDSHIEAPEQSSIFLMYPLVSEDHRLISFITDNLRLMAMGQMSPHELEGLLEQEIEAIQNELLLPSRSLQRTAEALPGFGILAAVGGIIITMQAIDGSIALIGYHVAAALVGTFIGIFGCYCGLDPLSNAMAQRVKRNMTAFECVRATLVAYVAKKPTLLAIDAGRKHIQLDIKPTFNQMEKWLAEQEG</sequence>
<name>LAFT_VIBPA</name>
<feature type="chain" id="PRO_0000189581" description="Chemotaxis protein LafT">
    <location>
        <begin position="1"/>
        <end position="285"/>
    </location>
</feature>
<feature type="transmembrane region" description="Helical" evidence="1">
    <location>
        <begin position="4"/>
        <end position="23"/>
    </location>
</feature>
<feature type="transmembrane region" description="Helical" evidence="1">
    <location>
        <begin position="34"/>
        <end position="51"/>
    </location>
</feature>
<feature type="transmembrane region" description="Helical" evidence="1">
    <location>
        <begin position="171"/>
        <end position="191"/>
    </location>
</feature>
<feature type="transmembrane region" description="Helical" evidence="1">
    <location>
        <begin position="201"/>
        <end position="222"/>
    </location>
</feature>
<feature type="topological domain" description="Cytoplasmic" evidence="1">
    <location>
        <begin position="223"/>
        <end position="285"/>
    </location>
</feature>
<evidence type="ECO:0000255" key="1"/>
<evidence type="ECO:0000305" key="2"/>
<dbReference type="EMBL" id="U20541">
    <property type="protein sequence ID" value="AAA62354.1"/>
    <property type="molecule type" value="Genomic_DNA"/>
</dbReference>
<dbReference type="EMBL" id="U52957">
    <property type="protein sequence ID" value="AAB07357.1"/>
    <property type="molecule type" value="Genomic_DNA"/>
</dbReference>
<dbReference type="EMBL" id="BA000032">
    <property type="protein sequence ID" value="BAC62899.1"/>
    <property type="molecule type" value="Genomic_DNA"/>
</dbReference>
<dbReference type="PIR" id="E40590">
    <property type="entry name" value="E40590"/>
</dbReference>
<dbReference type="RefSeq" id="NP_801066.1">
    <property type="nucleotide sequence ID" value="NC_004605.1"/>
</dbReference>
<dbReference type="SMR" id="Q03477"/>
<dbReference type="GeneID" id="1192252"/>
<dbReference type="KEGG" id="vpa:VPA1556"/>
<dbReference type="PATRIC" id="fig|223926.6.peg.4478"/>
<dbReference type="eggNOG" id="COG1291">
    <property type="taxonomic scope" value="Bacteria"/>
</dbReference>
<dbReference type="HOGENOM" id="CLU_068213_0_0_6"/>
<dbReference type="Proteomes" id="UP000002493">
    <property type="component" value="Chromosome 2"/>
</dbReference>
<dbReference type="GO" id="GO:0005886">
    <property type="term" value="C:plasma membrane"/>
    <property type="evidence" value="ECO:0007669"/>
    <property type="project" value="UniProtKB-SubCell"/>
</dbReference>
<dbReference type="GO" id="GO:0071978">
    <property type="term" value="P:bacterial-type flagellum-dependent swarming motility"/>
    <property type="evidence" value="ECO:0007669"/>
    <property type="project" value="InterPro"/>
</dbReference>
<dbReference type="GO" id="GO:0006935">
    <property type="term" value="P:chemotaxis"/>
    <property type="evidence" value="ECO:0007669"/>
    <property type="project" value="UniProtKB-KW"/>
</dbReference>
<dbReference type="GO" id="GO:1902600">
    <property type="term" value="P:proton transmembrane transport"/>
    <property type="evidence" value="ECO:0007669"/>
    <property type="project" value="UniProtKB-KW"/>
</dbReference>
<dbReference type="InterPro" id="IPR000540">
    <property type="entry name" value="Flag_MotA_CS"/>
</dbReference>
<dbReference type="InterPro" id="IPR022522">
    <property type="entry name" value="Flagellar_motor_stator_MotA"/>
</dbReference>
<dbReference type="InterPro" id="IPR047055">
    <property type="entry name" value="MotA-like"/>
</dbReference>
<dbReference type="InterPro" id="IPR002898">
    <property type="entry name" value="MotA_ExbB_proton_chnl"/>
</dbReference>
<dbReference type="InterPro" id="IPR046786">
    <property type="entry name" value="MotA_N"/>
</dbReference>
<dbReference type="NCBIfam" id="TIGR03818">
    <property type="entry name" value="MotA1"/>
    <property type="match status" value="1"/>
</dbReference>
<dbReference type="PANTHER" id="PTHR30433">
    <property type="entry name" value="CHEMOTAXIS PROTEIN MOTA"/>
    <property type="match status" value="1"/>
</dbReference>
<dbReference type="PANTHER" id="PTHR30433:SF4">
    <property type="entry name" value="MOTILITY PROTEIN A"/>
    <property type="match status" value="1"/>
</dbReference>
<dbReference type="Pfam" id="PF01618">
    <property type="entry name" value="MotA_ExbB"/>
    <property type="match status" value="1"/>
</dbReference>
<dbReference type="Pfam" id="PF20560">
    <property type="entry name" value="MotA_N"/>
    <property type="match status" value="1"/>
</dbReference>
<dbReference type="PROSITE" id="PS01307">
    <property type="entry name" value="MOTA"/>
    <property type="match status" value="1"/>
</dbReference>
<comment type="function">
    <text>Required for rotation of the flagellar motor. Probable transmembrane proton channel.</text>
</comment>
<comment type="subcellular location">
    <subcellularLocation>
        <location>Cell inner membrane</location>
        <topology>Multi-pass membrane protein</topology>
    </subcellularLocation>
</comment>
<comment type="induction">
    <text>Under conditions in which the polar flagellum is not functional.</text>
</comment>
<comment type="similarity">
    <text evidence="2">Belongs to the MotA family.</text>
</comment>
<proteinExistence type="evidence at transcript level"/>
<protein>
    <recommendedName>
        <fullName>Chemotaxis protein LafT</fullName>
    </recommendedName>
</protein>